<feature type="chain" id="PRO_0000348082" description="Uncharacterized protein DDB_G0268274">
    <location>
        <begin position="1"/>
        <end position="49"/>
    </location>
</feature>
<feature type="region of interest" description="Disordered" evidence="1">
    <location>
        <begin position="1"/>
        <end position="49"/>
    </location>
</feature>
<feature type="compositionally biased region" description="Basic and acidic residues" evidence="1">
    <location>
        <begin position="9"/>
        <end position="18"/>
    </location>
</feature>
<reference key="1">
    <citation type="journal article" date="2005" name="Nature">
        <title>The genome of the social amoeba Dictyostelium discoideum.</title>
        <authorList>
            <person name="Eichinger L."/>
            <person name="Pachebat J.A."/>
            <person name="Gloeckner G."/>
            <person name="Rajandream M.A."/>
            <person name="Sucgang R."/>
            <person name="Berriman M."/>
            <person name="Song J."/>
            <person name="Olsen R."/>
            <person name="Szafranski K."/>
            <person name="Xu Q."/>
            <person name="Tunggal B."/>
            <person name="Kummerfeld S."/>
            <person name="Madera M."/>
            <person name="Konfortov B.A."/>
            <person name="Rivero F."/>
            <person name="Bankier A.T."/>
            <person name="Lehmann R."/>
            <person name="Hamlin N."/>
            <person name="Davies R."/>
            <person name="Gaudet P."/>
            <person name="Fey P."/>
            <person name="Pilcher K."/>
            <person name="Chen G."/>
            <person name="Saunders D."/>
            <person name="Sodergren E.J."/>
            <person name="Davis P."/>
            <person name="Kerhornou A."/>
            <person name="Nie X."/>
            <person name="Hall N."/>
            <person name="Anjard C."/>
            <person name="Hemphill L."/>
            <person name="Bason N."/>
            <person name="Farbrother P."/>
            <person name="Desany B."/>
            <person name="Just E."/>
            <person name="Morio T."/>
            <person name="Rost R."/>
            <person name="Churcher C.M."/>
            <person name="Cooper J."/>
            <person name="Haydock S."/>
            <person name="van Driessche N."/>
            <person name="Cronin A."/>
            <person name="Goodhead I."/>
            <person name="Muzny D.M."/>
            <person name="Mourier T."/>
            <person name="Pain A."/>
            <person name="Lu M."/>
            <person name="Harper D."/>
            <person name="Lindsay R."/>
            <person name="Hauser H."/>
            <person name="James K.D."/>
            <person name="Quiles M."/>
            <person name="Madan Babu M."/>
            <person name="Saito T."/>
            <person name="Buchrieser C."/>
            <person name="Wardroper A."/>
            <person name="Felder M."/>
            <person name="Thangavelu M."/>
            <person name="Johnson D."/>
            <person name="Knights A."/>
            <person name="Loulseged H."/>
            <person name="Mungall K.L."/>
            <person name="Oliver K."/>
            <person name="Price C."/>
            <person name="Quail M.A."/>
            <person name="Urushihara H."/>
            <person name="Hernandez J."/>
            <person name="Rabbinowitsch E."/>
            <person name="Steffen D."/>
            <person name="Sanders M."/>
            <person name="Ma J."/>
            <person name="Kohara Y."/>
            <person name="Sharp S."/>
            <person name="Simmonds M.N."/>
            <person name="Spiegler S."/>
            <person name="Tivey A."/>
            <person name="Sugano S."/>
            <person name="White B."/>
            <person name="Walker D."/>
            <person name="Woodward J.R."/>
            <person name="Winckler T."/>
            <person name="Tanaka Y."/>
            <person name="Shaulsky G."/>
            <person name="Schleicher M."/>
            <person name="Weinstock G.M."/>
            <person name="Rosenthal A."/>
            <person name="Cox E.C."/>
            <person name="Chisholm R.L."/>
            <person name="Gibbs R.A."/>
            <person name="Loomis W.F."/>
            <person name="Platzer M."/>
            <person name="Kay R.R."/>
            <person name="Williams J.G."/>
            <person name="Dear P.H."/>
            <person name="Noegel A.A."/>
            <person name="Barrell B.G."/>
            <person name="Kuspa A."/>
        </authorList>
    </citation>
    <scope>NUCLEOTIDE SEQUENCE [LARGE SCALE GENOMIC DNA]</scope>
    <source>
        <strain>AX4</strain>
    </source>
</reference>
<gene>
    <name type="ORF">DDB_G0268274</name>
</gene>
<dbReference type="EMBL" id="AAFI02000003">
    <property type="protein sequence ID" value="EAL73590.1"/>
    <property type="molecule type" value="Genomic_DNA"/>
</dbReference>
<dbReference type="RefSeq" id="XP_647119.1">
    <property type="nucleotide sequence ID" value="XM_642027.1"/>
</dbReference>
<dbReference type="SMR" id="Q55GR5"/>
<dbReference type="PaxDb" id="44689-DDB0202076"/>
<dbReference type="EnsemblProtists" id="EAL73590">
    <property type="protein sequence ID" value="EAL73590"/>
    <property type="gene ID" value="DDB_G0268274"/>
</dbReference>
<dbReference type="GeneID" id="8615923"/>
<dbReference type="KEGG" id="ddi:DDB_G0268274"/>
<dbReference type="dictyBase" id="DDB_G0268274"/>
<dbReference type="VEuPathDB" id="AmoebaDB:DDB_G0268274"/>
<dbReference type="HOGENOM" id="CLU_3145608_0_0_1"/>
<dbReference type="InParanoid" id="Q55GR5"/>
<dbReference type="PRO" id="PR:Q55GR5"/>
<dbReference type="Proteomes" id="UP000002195">
    <property type="component" value="Chromosome 1"/>
</dbReference>
<name>Y2076_DICDI</name>
<accession>Q55GR5</accession>
<organism>
    <name type="scientific">Dictyostelium discoideum</name>
    <name type="common">Social amoeba</name>
    <dbReference type="NCBI Taxonomy" id="44689"/>
    <lineage>
        <taxon>Eukaryota</taxon>
        <taxon>Amoebozoa</taxon>
        <taxon>Evosea</taxon>
        <taxon>Eumycetozoa</taxon>
        <taxon>Dictyostelia</taxon>
        <taxon>Dictyosteliales</taxon>
        <taxon>Dictyosteliaceae</taxon>
        <taxon>Dictyostelium</taxon>
    </lineage>
</organism>
<keyword id="KW-1185">Reference proteome</keyword>
<sequence length="49" mass="5568">MSNETFEQNEPKPTKVEELQPGDVEAVEDSTPVREITQTDHINKAMLQI</sequence>
<protein>
    <recommendedName>
        <fullName>Uncharacterized protein DDB_G0268274</fullName>
    </recommendedName>
</protein>
<evidence type="ECO:0000256" key="1">
    <source>
        <dbReference type="SAM" id="MobiDB-lite"/>
    </source>
</evidence>
<proteinExistence type="predicted"/>